<organism>
    <name type="scientific">Colwellia psychrerythraea (strain 34H / ATCC BAA-681)</name>
    <name type="common">Vibrio psychroerythus</name>
    <dbReference type="NCBI Taxonomy" id="167879"/>
    <lineage>
        <taxon>Bacteria</taxon>
        <taxon>Pseudomonadati</taxon>
        <taxon>Pseudomonadota</taxon>
        <taxon>Gammaproteobacteria</taxon>
        <taxon>Alteromonadales</taxon>
        <taxon>Colwelliaceae</taxon>
        <taxon>Colwellia</taxon>
    </lineage>
</organism>
<comment type="function">
    <text evidence="1">Co-chaperone involved in the maturation of iron-sulfur cluster-containing proteins. Seems to help targeting proteins to be folded toward HscA.</text>
</comment>
<comment type="subunit">
    <text evidence="1">Interacts with HscA and stimulates its ATPase activity.</text>
</comment>
<comment type="similarity">
    <text evidence="1">Belongs to the HscB family.</text>
</comment>
<dbReference type="EMBL" id="CP000083">
    <property type="protein sequence ID" value="AAZ28735.1"/>
    <property type="molecule type" value="Genomic_DNA"/>
</dbReference>
<dbReference type="RefSeq" id="WP_011041972.1">
    <property type="nucleotide sequence ID" value="NC_003910.7"/>
</dbReference>
<dbReference type="SMR" id="Q486Y7"/>
<dbReference type="STRING" id="167879.CPS_1135"/>
<dbReference type="KEGG" id="cps:CPS_1135"/>
<dbReference type="HOGENOM" id="CLU_068529_2_0_6"/>
<dbReference type="Proteomes" id="UP000000547">
    <property type="component" value="Chromosome"/>
</dbReference>
<dbReference type="GO" id="GO:1990230">
    <property type="term" value="C:iron-sulfur cluster transfer complex"/>
    <property type="evidence" value="ECO:0007669"/>
    <property type="project" value="TreeGrafter"/>
</dbReference>
<dbReference type="GO" id="GO:0001671">
    <property type="term" value="F:ATPase activator activity"/>
    <property type="evidence" value="ECO:0007669"/>
    <property type="project" value="InterPro"/>
</dbReference>
<dbReference type="GO" id="GO:0051087">
    <property type="term" value="F:protein-folding chaperone binding"/>
    <property type="evidence" value="ECO:0007669"/>
    <property type="project" value="InterPro"/>
</dbReference>
<dbReference type="GO" id="GO:0044571">
    <property type="term" value="P:[2Fe-2S] cluster assembly"/>
    <property type="evidence" value="ECO:0007669"/>
    <property type="project" value="InterPro"/>
</dbReference>
<dbReference type="GO" id="GO:0051259">
    <property type="term" value="P:protein complex oligomerization"/>
    <property type="evidence" value="ECO:0007669"/>
    <property type="project" value="InterPro"/>
</dbReference>
<dbReference type="GO" id="GO:0006457">
    <property type="term" value="P:protein folding"/>
    <property type="evidence" value="ECO:0007669"/>
    <property type="project" value="UniProtKB-UniRule"/>
</dbReference>
<dbReference type="CDD" id="cd06257">
    <property type="entry name" value="DnaJ"/>
    <property type="match status" value="1"/>
</dbReference>
<dbReference type="Gene3D" id="1.10.287.110">
    <property type="entry name" value="DnaJ domain"/>
    <property type="match status" value="1"/>
</dbReference>
<dbReference type="Gene3D" id="1.20.1280.20">
    <property type="entry name" value="HscB, C-terminal domain"/>
    <property type="match status" value="1"/>
</dbReference>
<dbReference type="HAMAP" id="MF_00682">
    <property type="entry name" value="HscB"/>
    <property type="match status" value="1"/>
</dbReference>
<dbReference type="InterPro" id="IPR001623">
    <property type="entry name" value="DnaJ_domain"/>
</dbReference>
<dbReference type="InterPro" id="IPR004640">
    <property type="entry name" value="HscB"/>
</dbReference>
<dbReference type="InterPro" id="IPR036386">
    <property type="entry name" value="HscB_C_sf"/>
</dbReference>
<dbReference type="InterPro" id="IPR009073">
    <property type="entry name" value="HscB_oligo_C"/>
</dbReference>
<dbReference type="InterPro" id="IPR036869">
    <property type="entry name" value="J_dom_sf"/>
</dbReference>
<dbReference type="NCBIfam" id="TIGR00714">
    <property type="entry name" value="hscB"/>
    <property type="match status" value="1"/>
</dbReference>
<dbReference type="NCBIfam" id="NF003449">
    <property type="entry name" value="PRK05014.1"/>
    <property type="match status" value="1"/>
</dbReference>
<dbReference type="PANTHER" id="PTHR14021">
    <property type="entry name" value="IRON-SULFUR CLUSTER CO-CHAPERONE PROTEIN HSCB"/>
    <property type="match status" value="1"/>
</dbReference>
<dbReference type="PANTHER" id="PTHR14021:SF15">
    <property type="entry name" value="IRON-SULFUR CLUSTER CO-CHAPERONE PROTEIN HSCB"/>
    <property type="match status" value="1"/>
</dbReference>
<dbReference type="Pfam" id="PF00226">
    <property type="entry name" value="DnaJ"/>
    <property type="match status" value="1"/>
</dbReference>
<dbReference type="Pfam" id="PF07743">
    <property type="entry name" value="HSCB_C"/>
    <property type="match status" value="1"/>
</dbReference>
<dbReference type="SMART" id="SM00271">
    <property type="entry name" value="DnaJ"/>
    <property type="match status" value="1"/>
</dbReference>
<dbReference type="SUPFAM" id="SSF46565">
    <property type="entry name" value="Chaperone J-domain"/>
    <property type="match status" value="1"/>
</dbReference>
<dbReference type="SUPFAM" id="SSF47144">
    <property type="entry name" value="HSC20 (HSCB), C-terminal oligomerisation domain"/>
    <property type="match status" value="1"/>
</dbReference>
<dbReference type="PROSITE" id="PS50076">
    <property type="entry name" value="DNAJ_2"/>
    <property type="match status" value="1"/>
</dbReference>
<keyword id="KW-0143">Chaperone</keyword>
<reference key="1">
    <citation type="journal article" date="2005" name="Proc. Natl. Acad. Sci. U.S.A.">
        <title>The psychrophilic lifestyle as revealed by the genome sequence of Colwellia psychrerythraea 34H through genomic and proteomic analyses.</title>
        <authorList>
            <person name="Methe B.A."/>
            <person name="Nelson K.E."/>
            <person name="Deming J.W."/>
            <person name="Momen B."/>
            <person name="Melamud E."/>
            <person name="Zhang X."/>
            <person name="Moult J."/>
            <person name="Madupu R."/>
            <person name="Nelson W.C."/>
            <person name="Dodson R.J."/>
            <person name="Brinkac L.M."/>
            <person name="Daugherty S.C."/>
            <person name="Durkin A.S."/>
            <person name="DeBoy R.T."/>
            <person name="Kolonay J.F."/>
            <person name="Sullivan S.A."/>
            <person name="Zhou L."/>
            <person name="Davidsen T.M."/>
            <person name="Wu M."/>
            <person name="Huston A.L."/>
            <person name="Lewis M."/>
            <person name="Weaver B."/>
            <person name="Weidman J.F."/>
            <person name="Khouri H."/>
            <person name="Utterback T.R."/>
            <person name="Feldblyum T.V."/>
            <person name="Fraser C.M."/>
        </authorList>
    </citation>
    <scope>NUCLEOTIDE SEQUENCE [LARGE SCALE GENOMIC DNA]</scope>
    <source>
        <strain>34H / ATCC BAA-681</strain>
    </source>
</reference>
<proteinExistence type="inferred from homology"/>
<gene>
    <name evidence="1" type="primary">hscB</name>
    <name type="ordered locus">CPS_1135</name>
</gene>
<protein>
    <recommendedName>
        <fullName evidence="1">Co-chaperone protein HscB homolog</fullName>
    </recommendedName>
</protein>
<accession>Q486Y7</accession>
<feature type="chain" id="PRO_1000083005" description="Co-chaperone protein HscB homolog">
    <location>
        <begin position="1"/>
        <end position="175"/>
    </location>
</feature>
<feature type="domain" description="J" evidence="1">
    <location>
        <begin position="2"/>
        <end position="74"/>
    </location>
</feature>
<name>HSCB_COLP3</name>
<sequence length="175" mass="20344">MNYFQLFNIEVSFDVDLQQLSSSYQTLQKTVHPDKFAHASEQEQRIAVQKSAQINDAYQTLKNPLQRAEYILVQRSVEMPNEQHSFQDTSFLMRQMELREMLEDVRHSGDVDAALLEVQSVLSTEYLQLSQVMRTQISENNAASNSAACDNLRKLKFYQKLNIEVDRLEDSLFDD</sequence>
<evidence type="ECO:0000255" key="1">
    <source>
        <dbReference type="HAMAP-Rule" id="MF_00682"/>
    </source>
</evidence>